<sequence>MNKNIIIKSIAALTILTSITGVGTTMVEGIQQTAKAENTVKQITNTNVAPYSGVTWMGAGTGFVVGNHTIITNKHVTYHMKVGDEIKAHPNGFYNNGGGLYKVTKIVDYPGKEDIAVVQVEEKSTQPKGRKFKDFTSKFNIASEAKENEPISVIGYPNPNGNKLQMYESTGKVLSVNGNIVSSDAIIQPGSSGSPILNSKHEAIGVIYAGNKPSGESTRGFAVYFSPEIKKFIADNLDK</sequence>
<comment type="subcellular location">
    <subcellularLocation>
        <location evidence="1">Secreted</location>
    </subcellularLocation>
</comment>
<comment type="similarity">
    <text evidence="2">Belongs to the peptidase S1B family.</text>
</comment>
<accession>Q5HEW5</accession>
<gene>
    <name type="primary">splF</name>
    <name type="ordered locus">SACOL1864</name>
</gene>
<reference key="1">
    <citation type="journal article" date="2005" name="J. Bacteriol.">
        <title>Insights on evolution of virulence and resistance from the complete genome analysis of an early methicillin-resistant Staphylococcus aureus strain and a biofilm-producing methicillin-resistant Staphylococcus epidermidis strain.</title>
        <authorList>
            <person name="Gill S.R."/>
            <person name="Fouts D.E."/>
            <person name="Archer G.L."/>
            <person name="Mongodin E.F."/>
            <person name="DeBoy R.T."/>
            <person name="Ravel J."/>
            <person name="Paulsen I.T."/>
            <person name="Kolonay J.F."/>
            <person name="Brinkac L.M."/>
            <person name="Beanan M.J."/>
            <person name="Dodson R.J."/>
            <person name="Daugherty S.C."/>
            <person name="Madupu R."/>
            <person name="Angiuoli S.V."/>
            <person name="Durkin A.S."/>
            <person name="Haft D.H."/>
            <person name="Vamathevan J.J."/>
            <person name="Khouri H."/>
            <person name="Utterback T.R."/>
            <person name="Lee C."/>
            <person name="Dimitrov G."/>
            <person name="Jiang L."/>
            <person name="Qin H."/>
            <person name="Weidman J."/>
            <person name="Tran K."/>
            <person name="Kang K.H."/>
            <person name="Hance I.R."/>
            <person name="Nelson K.E."/>
            <person name="Fraser C.M."/>
        </authorList>
    </citation>
    <scope>NUCLEOTIDE SEQUENCE [LARGE SCALE GENOMIC DNA]</scope>
    <source>
        <strain>COL</strain>
    </source>
</reference>
<dbReference type="EC" id="3.4.21.-"/>
<dbReference type="EMBL" id="CP000046">
    <property type="protein sequence ID" value="AAW36879.1"/>
    <property type="molecule type" value="Genomic_DNA"/>
</dbReference>
<dbReference type="RefSeq" id="WP_001038688.1">
    <property type="nucleotide sequence ID" value="NZ_JBGOFO010000015.1"/>
</dbReference>
<dbReference type="SMR" id="Q5HEW5"/>
<dbReference type="MEROPS" id="S01.526"/>
<dbReference type="KEGG" id="sac:SACOL1864"/>
<dbReference type="HOGENOM" id="CLU_073589_2_0_9"/>
<dbReference type="Proteomes" id="UP000000530">
    <property type="component" value="Chromosome"/>
</dbReference>
<dbReference type="GO" id="GO:0005576">
    <property type="term" value="C:extracellular region"/>
    <property type="evidence" value="ECO:0007669"/>
    <property type="project" value="UniProtKB-SubCell"/>
</dbReference>
<dbReference type="GO" id="GO:0008236">
    <property type="term" value="F:serine-type peptidase activity"/>
    <property type="evidence" value="ECO:0007669"/>
    <property type="project" value="UniProtKB-KW"/>
</dbReference>
<dbReference type="GO" id="GO:0006508">
    <property type="term" value="P:proteolysis"/>
    <property type="evidence" value="ECO:0007669"/>
    <property type="project" value="UniProtKB-KW"/>
</dbReference>
<dbReference type="Gene3D" id="2.40.10.10">
    <property type="entry name" value="Trypsin-like serine proteases"/>
    <property type="match status" value="2"/>
</dbReference>
<dbReference type="InterPro" id="IPR009003">
    <property type="entry name" value="Peptidase_S1_PA"/>
</dbReference>
<dbReference type="InterPro" id="IPR043504">
    <property type="entry name" value="Peptidase_S1_PA_chymotrypsin"/>
</dbReference>
<dbReference type="InterPro" id="IPR008256">
    <property type="entry name" value="Peptidase_S1B"/>
</dbReference>
<dbReference type="InterPro" id="IPR028301">
    <property type="entry name" value="V8_his_AS"/>
</dbReference>
<dbReference type="PANTHER" id="PTHR43019:SF23">
    <property type="entry name" value="PROTEASE DO-LIKE 5, CHLOROPLASTIC"/>
    <property type="match status" value="1"/>
</dbReference>
<dbReference type="PANTHER" id="PTHR43019">
    <property type="entry name" value="SERINE ENDOPROTEASE DEGS"/>
    <property type="match status" value="1"/>
</dbReference>
<dbReference type="Pfam" id="PF13365">
    <property type="entry name" value="Trypsin_2"/>
    <property type="match status" value="1"/>
</dbReference>
<dbReference type="PRINTS" id="PR00839">
    <property type="entry name" value="V8PROTEASE"/>
</dbReference>
<dbReference type="SUPFAM" id="SSF50494">
    <property type="entry name" value="Trypsin-like serine proteases"/>
    <property type="match status" value="1"/>
</dbReference>
<dbReference type="PROSITE" id="PS00672">
    <property type="entry name" value="V8_HIS"/>
    <property type="match status" value="1"/>
</dbReference>
<keyword id="KW-0378">Hydrolase</keyword>
<keyword id="KW-0645">Protease</keyword>
<keyword id="KW-0964">Secreted</keyword>
<keyword id="KW-0720">Serine protease</keyword>
<keyword id="KW-0732">Signal</keyword>
<evidence type="ECO:0000250" key="1"/>
<evidence type="ECO:0000305" key="2"/>
<proteinExistence type="inferred from homology"/>
<protein>
    <recommendedName>
        <fullName>Serine protease SplF</fullName>
        <ecNumber>3.4.21.-</ecNumber>
    </recommendedName>
</protein>
<name>SPLF_STAAC</name>
<feature type="signal peptide" evidence="1">
    <location>
        <begin position="1"/>
        <end position="36"/>
    </location>
</feature>
<feature type="chain" id="PRO_0000359579" description="Serine protease SplF">
    <location>
        <begin position="37"/>
        <end position="239"/>
    </location>
</feature>
<feature type="active site" description="Charge relay system" evidence="1">
    <location>
        <position position="75"/>
    </location>
</feature>
<feature type="active site" description="Charge relay system" evidence="1">
    <location>
        <position position="114"/>
    </location>
</feature>
<feature type="active site" description="Charge relay system" evidence="1">
    <location>
        <position position="192"/>
    </location>
</feature>
<organism>
    <name type="scientific">Staphylococcus aureus (strain COL)</name>
    <dbReference type="NCBI Taxonomy" id="93062"/>
    <lineage>
        <taxon>Bacteria</taxon>
        <taxon>Bacillati</taxon>
        <taxon>Bacillota</taxon>
        <taxon>Bacilli</taxon>
        <taxon>Bacillales</taxon>
        <taxon>Staphylococcaceae</taxon>
        <taxon>Staphylococcus</taxon>
    </lineage>
</organism>